<gene>
    <name evidence="1" type="primary">prfA</name>
    <name type="ordered locus">Amet_0331</name>
</gene>
<proteinExistence type="inferred from homology"/>
<feature type="chain" id="PRO_1000057611" description="Peptide chain release factor 1">
    <location>
        <begin position="1"/>
        <end position="357"/>
    </location>
</feature>
<feature type="modified residue" description="N5-methylglutamine" evidence="1">
    <location>
        <position position="235"/>
    </location>
</feature>
<evidence type="ECO:0000255" key="1">
    <source>
        <dbReference type="HAMAP-Rule" id="MF_00093"/>
    </source>
</evidence>
<accession>A6TK43</accession>
<sequence length="357" mass="40305">MLDKLAFLQEKYEDLGEKISDPEIINDQVQWQKLIKEHSEIEPIVMKYREYKTTQQALGETKEIMHDKATDAELKEMAKMEVEELEESIVEMEEQLKVMLLPTDPNDDKNVIVEIRGGAGGDEAGLFAAVLFRMYTRYAERSGWKVEMMSLNESGVGGYKEVIFMIKGKGAYSQLKYESGAHRVQRIPTTESGGRIHTSTATVVIMPEAEDVGEVNIDTNELRIDVFRSSGNGGQSVNTTDSAVRITHLPTGLVVSCQDGKSQLKNKEKAMKVLKSRLLDQMIQEQDAEISQDRRSKVGTGDRSERIRTYNFPQGRVTDHRINVTVYKLDAFLDGEINEMIDSLITSAQAEKMQEVQ</sequence>
<protein>
    <recommendedName>
        <fullName evidence="1">Peptide chain release factor 1</fullName>
        <shortName evidence="1">RF-1</shortName>
    </recommendedName>
</protein>
<keyword id="KW-0963">Cytoplasm</keyword>
<keyword id="KW-0488">Methylation</keyword>
<keyword id="KW-0648">Protein biosynthesis</keyword>
<keyword id="KW-1185">Reference proteome</keyword>
<organism>
    <name type="scientific">Alkaliphilus metalliredigens (strain QYMF)</name>
    <dbReference type="NCBI Taxonomy" id="293826"/>
    <lineage>
        <taxon>Bacteria</taxon>
        <taxon>Bacillati</taxon>
        <taxon>Bacillota</taxon>
        <taxon>Clostridia</taxon>
        <taxon>Peptostreptococcales</taxon>
        <taxon>Natronincolaceae</taxon>
        <taxon>Alkaliphilus</taxon>
    </lineage>
</organism>
<name>RF1_ALKMQ</name>
<dbReference type="EMBL" id="CP000724">
    <property type="protein sequence ID" value="ABR46561.1"/>
    <property type="molecule type" value="Genomic_DNA"/>
</dbReference>
<dbReference type="RefSeq" id="WP_011971469.1">
    <property type="nucleotide sequence ID" value="NC_009633.1"/>
</dbReference>
<dbReference type="SMR" id="A6TK43"/>
<dbReference type="STRING" id="293826.Amet_0331"/>
<dbReference type="KEGG" id="amt:Amet_0331"/>
<dbReference type="eggNOG" id="COG0216">
    <property type="taxonomic scope" value="Bacteria"/>
</dbReference>
<dbReference type="HOGENOM" id="CLU_036856_0_1_9"/>
<dbReference type="OrthoDB" id="9806673at2"/>
<dbReference type="Proteomes" id="UP000001572">
    <property type="component" value="Chromosome"/>
</dbReference>
<dbReference type="GO" id="GO:0005737">
    <property type="term" value="C:cytoplasm"/>
    <property type="evidence" value="ECO:0007669"/>
    <property type="project" value="UniProtKB-SubCell"/>
</dbReference>
<dbReference type="GO" id="GO:0016149">
    <property type="term" value="F:translation release factor activity, codon specific"/>
    <property type="evidence" value="ECO:0007669"/>
    <property type="project" value="UniProtKB-UniRule"/>
</dbReference>
<dbReference type="FunFam" id="3.30.160.20:FF:000004">
    <property type="entry name" value="Peptide chain release factor 1"/>
    <property type="match status" value="1"/>
</dbReference>
<dbReference type="FunFam" id="3.30.70.1660:FF:000002">
    <property type="entry name" value="Peptide chain release factor 1"/>
    <property type="match status" value="1"/>
</dbReference>
<dbReference type="FunFam" id="3.30.70.1660:FF:000004">
    <property type="entry name" value="Peptide chain release factor 1"/>
    <property type="match status" value="1"/>
</dbReference>
<dbReference type="Gene3D" id="3.30.160.20">
    <property type="match status" value="1"/>
</dbReference>
<dbReference type="Gene3D" id="3.30.70.1660">
    <property type="match status" value="1"/>
</dbReference>
<dbReference type="Gene3D" id="6.10.140.1950">
    <property type="match status" value="1"/>
</dbReference>
<dbReference type="HAMAP" id="MF_00093">
    <property type="entry name" value="Rel_fac_1"/>
    <property type="match status" value="1"/>
</dbReference>
<dbReference type="InterPro" id="IPR005139">
    <property type="entry name" value="PCRF"/>
</dbReference>
<dbReference type="InterPro" id="IPR000352">
    <property type="entry name" value="Pep_chain_release_fac_I"/>
</dbReference>
<dbReference type="InterPro" id="IPR045853">
    <property type="entry name" value="Pep_chain_release_fac_I_sf"/>
</dbReference>
<dbReference type="InterPro" id="IPR050057">
    <property type="entry name" value="Prokaryotic/Mito_RF"/>
</dbReference>
<dbReference type="InterPro" id="IPR004373">
    <property type="entry name" value="RF-1"/>
</dbReference>
<dbReference type="NCBIfam" id="TIGR00019">
    <property type="entry name" value="prfA"/>
    <property type="match status" value="1"/>
</dbReference>
<dbReference type="NCBIfam" id="NF001859">
    <property type="entry name" value="PRK00591.1"/>
    <property type="match status" value="1"/>
</dbReference>
<dbReference type="PANTHER" id="PTHR43804">
    <property type="entry name" value="LD18447P"/>
    <property type="match status" value="1"/>
</dbReference>
<dbReference type="PANTHER" id="PTHR43804:SF7">
    <property type="entry name" value="LD18447P"/>
    <property type="match status" value="1"/>
</dbReference>
<dbReference type="Pfam" id="PF03462">
    <property type="entry name" value="PCRF"/>
    <property type="match status" value="1"/>
</dbReference>
<dbReference type="Pfam" id="PF00472">
    <property type="entry name" value="RF-1"/>
    <property type="match status" value="1"/>
</dbReference>
<dbReference type="SMART" id="SM00937">
    <property type="entry name" value="PCRF"/>
    <property type="match status" value="1"/>
</dbReference>
<dbReference type="SUPFAM" id="SSF75620">
    <property type="entry name" value="Release factor"/>
    <property type="match status" value="1"/>
</dbReference>
<dbReference type="PROSITE" id="PS00745">
    <property type="entry name" value="RF_PROK_I"/>
    <property type="match status" value="1"/>
</dbReference>
<reference key="1">
    <citation type="journal article" date="2016" name="Genome Announc.">
        <title>Complete genome sequence of Alkaliphilus metalliredigens strain QYMF, an alkaliphilic and metal-reducing bacterium isolated from borax-contaminated leachate ponds.</title>
        <authorList>
            <person name="Hwang C."/>
            <person name="Copeland A."/>
            <person name="Lucas S."/>
            <person name="Lapidus A."/>
            <person name="Barry K."/>
            <person name="Detter J.C."/>
            <person name="Glavina Del Rio T."/>
            <person name="Hammon N."/>
            <person name="Israni S."/>
            <person name="Dalin E."/>
            <person name="Tice H."/>
            <person name="Pitluck S."/>
            <person name="Chertkov O."/>
            <person name="Brettin T."/>
            <person name="Bruce D."/>
            <person name="Han C."/>
            <person name="Schmutz J."/>
            <person name="Larimer F."/>
            <person name="Land M.L."/>
            <person name="Hauser L."/>
            <person name="Kyrpides N."/>
            <person name="Mikhailova N."/>
            <person name="Ye Q."/>
            <person name="Zhou J."/>
            <person name="Richardson P."/>
            <person name="Fields M.W."/>
        </authorList>
    </citation>
    <scope>NUCLEOTIDE SEQUENCE [LARGE SCALE GENOMIC DNA]</scope>
    <source>
        <strain>QYMF</strain>
    </source>
</reference>
<comment type="function">
    <text evidence="1">Peptide chain release factor 1 directs the termination of translation in response to the peptide chain termination codons UAG and UAA.</text>
</comment>
<comment type="subcellular location">
    <subcellularLocation>
        <location evidence="1">Cytoplasm</location>
    </subcellularLocation>
</comment>
<comment type="PTM">
    <text evidence="1">Methylated by PrmC. Methylation increases the termination efficiency of RF1.</text>
</comment>
<comment type="similarity">
    <text evidence="1">Belongs to the prokaryotic/mitochondrial release factor family.</text>
</comment>